<proteinExistence type="inferred from homology"/>
<reference key="1">
    <citation type="journal article" date="2007" name="DNA Res.">
        <title>Complete genomic structure of the bloom-forming toxic cyanobacterium Microcystis aeruginosa NIES-843.</title>
        <authorList>
            <person name="Kaneko T."/>
            <person name="Nakajima N."/>
            <person name="Okamoto S."/>
            <person name="Suzuki I."/>
            <person name="Tanabe Y."/>
            <person name="Tamaoki M."/>
            <person name="Nakamura Y."/>
            <person name="Kasai F."/>
            <person name="Watanabe A."/>
            <person name="Kawashima K."/>
            <person name="Kishida Y."/>
            <person name="Ono A."/>
            <person name="Shimizu Y."/>
            <person name="Takahashi C."/>
            <person name="Minami C."/>
            <person name="Fujishiro T."/>
            <person name="Kohara M."/>
            <person name="Katoh M."/>
            <person name="Nakazaki N."/>
            <person name="Nakayama S."/>
            <person name="Yamada M."/>
            <person name="Tabata S."/>
            <person name="Watanabe M.M."/>
        </authorList>
    </citation>
    <scope>NUCLEOTIDE SEQUENCE [LARGE SCALE GENOMIC DNA]</scope>
    <source>
        <strain>NIES-843 / IAM M-247</strain>
    </source>
</reference>
<sequence>MSGSTGERPFGDIVTSIRYWIIHSITIPMLFIAGWLFVSTGLAYDVFGTPRPDEYYTQERQELPIINDRFEAKNQIEQFNQ</sequence>
<organism>
    <name type="scientific">Microcystis aeruginosa (strain NIES-843 / IAM M-2473)</name>
    <dbReference type="NCBI Taxonomy" id="449447"/>
    <lineage>
        <taxon>Bacteria</taxon>
        <taxon>Bacillati</taxon>
        <taxon>Cyanobacteriota</taxon>
        <taxon>Cyanophyceae</taxon>
        <taxon>Oscillatoriophycideae</taxon>
        <taxon>Chroococcales</taxon>
        <taxon>Microcystaceae</taxon>
        <taxon>Microcystis</taxon>
    </lineage>
</organism>
<comment type="function">
    <text evidence="1">This b-type cytochrome is tightly associated with the reaction center of photosystem II (PSII). PSII is a light-driven water:plastoquinone oxidoreductase that uses light energy to abstract electrons from H(2)O, generating O(2) and a proton gradient subsequently used for ATP formation. It consists of a core antenna complex that captures photons, and an electron transfer chain that converts photonic excitation into a charge separation.</text>
</comment>
<comment type="cofactor">
    <cofactor evidence="1">
        <name>heme b</name>
        <dbReference type="ChEBI" id="CHEBI:60344"/>
    </cofactor>
    <text evidence="1">With its partner (PsbF) binds heme. PSII binds additional chlorophylls, carotenoids and specific lipids.</text>
</comment>
<comment type="subunit">
    <text evidence="1">Heterodimer of an alpha subunit and a beta subunit. PSII is composed of 1 copy each of membrane proteins PsbA, PsbB, PsbC, PsbD, PsbE, PsbF, PsbH, PsbI, PsbJ, PsbK, PsbL, PsbM, PsbT, PsbX, PsbY, PsbZ, Psb30/Ycf12, peripheral proteins PsbO, CyanoQ (PsbQ), PsbU, PsbV and a large number of cofactors. It forms dimeric complexes.</text>
</comment>
<comment type="subcellular location">
    <subcellularLocation>
        <location evidence="1">Cellular thylakoid membrane</location>
        <topology evidence="1">Single-pass membrane protein</topology>
    </subcellularLocation>
</comment>
<comment type="similarity">
    <text evidence="1">Belongs to the PsbE/PsbF family.</text>
</comment>
<gene>
    <name evidence="1" type="primary">psbE</name>
    <name type="ordered locus">MAE_33030</name>
</gene>
<feature type="chain" id="PRO_1000130900" description="Cytochrome b559 subunit alpha">
    <location>
        <begin position="1"/>
        <end position="81"/>
    </location>
</feature>
<feature type="transmembrane region" description="Helical" evidence="1">
    <location>
        <begin position="21"/>
        <end position="35"/>
    </location>
</feature>
<feature type="binding site" description="axial binding residue" evidence="1">
    <location>
        <position position="23"/>
    </location>
    <ligand>
        <name>heme</name>
        <dbReference type="ChEBI" id="CHEBI:30413"/>
        <note>ligand shared with beta subunit</note>
    </ligand>
    <ligandPart>
        <name>Fe</name>
        <dbReference type="ChEBI" id="CHEBI:18248"/>
    </ligandPart>
</feature>
<evidence type="ECO:0000255" key="1">
    <source>
        <dbReference type="HAMAP-Rule" id="MF_00642"/>
    </source>
</evidence>
<accession>B0JLV1</accession>
<keyword id="KW-0249">Electron transport</keyword>
<keyword id="KW-0349">Heme</keyword>
<keyword id="KW-0408">Iron</keyword>
<keyword id="KW-0472">Membrane</keyword>
<keyword id="KW-0479">Metal-binding</keyword>
<keyword id="KW-0602">Photosynthesis</keyword>
<keyword id="KW-0604">Photosystem II</keyword>
<keyword id="KW-0793">Thylakoid</keyword>
<keyword id="KW-0812">Transmembrane</keyword>
<keyword id="KW-1133">Transmembrane helix</keyword>
<keyword id="KW-0813">Transport</keyword>
<dbReference type="EMBL" id="AP009552">
    <property type="protein sequence ID" value="BAG03125.1"/>
    <property type="molecule type" value="Genomic_DNA"/>
</dbReference>
<dbReference type="RefSeq" id="WP_002749269.1">
    <property type="nucleotide sequence ID" value="NC_010296.1"/>
</dbReference>
<dbReference type="SMR" id="B0JLV1"/>
<dbReference type="STRING" id="449447.MAE_33030"/>
<dbReference type="PaxDb" id="449447-MAE_33030"/>
<dbReference type="EnsemblBacteria" id="BAG03125">
    <property type="protein sequence ID" value="BAG03125"/>
    <property type="gene ID" value="MAE_33030"/>
</dbReference>
<dbReference type="GeneID" id="66707075"/>
<dbReference type="KEGG" id="mar:MAE_33030"/>
<dbReference type="eggNOG" id="ENOG5032RR6">
    <property type="taxonomic scope" value="Bacteria"/>
</dbReference>
<dbReference type="HOGENOM" id="CLU_194095_0_0_3"/>
<dbReference type="BioCyc" id="MAER449447:MAE_RS14285-MONOMER"/>
<dbReference type="Proteomes" id="UP000001510">
    <property type="component" value="Chromosome"/>
</dbReference>
<dbReference type="GO" id="GO:0009539">
    <property type="term" value="C:photosystem II reaction center"/>
    <property type="evidence" value="ECO:0007669"/>
    <property type="project" value="InterPro"/>
</dbReference>
<dbReference type="GO" id="GO:0031676">
    <property type="term" value="C:plasma membrane-derived thylakoid membrane"/>
    <property type="evidence" value="ECO:0007669"/>
    <property type="project" value="UniProtKB-SubCell"/>
</dbReference>
<dbReference type="GO" id="GO:0009055">
    <property type="term" value="F:electron transfer activity"/>
    <property type="evidence" value="ECO:0007669"/>
    <property type="project" value="UniProtKB-UniRule"/>
</dbReference>
<dbReference type="GO" id="GO:0020037">
    <property type="term" value="F:heme binding"/>
    <property type="evidence" value="ECO:0007669"/>
    <property type="project" value="InterPro"/>
</dbReference>
<dbReference type="GO" id="GO:0005506">
    <property type="term" value="F:iron ion binding"/>
    <property type="evidence" value="ECO:0007669"/>
    <property type="project" value="UniProtKB-UniRule"/>
</dbReference>
<dbReference type="GO" id="GO:0009767">
    <property type="term" value="P:photosynthetic electron transport chain"/>
    <property type="evidence" value="ECO:0007669"/>
    <property type="project" value="InterPro"/>
</dbReference>
<dbReference type="Gene3D" id="1.20.5.860">
    <property type="entry name" value="Photosystem II cytochrome b559, alpha subunit"/>
    <property type="match status" value="1"/>
</dbReference>
<dbReference type="HAMAP" id="MF_00642">
    <property type="entry name" value="PSII_PsbE"/>
    <property type="match status" value="1"/>
</dbReference>
<dbReference type="InterPro" id="IPR006217">
    <property type="entry name" value="PSII_cyt_b559_asu"/>
</dbReference>
<dbReference type="InterPro" id="IPR037025">
    <property type="entry name" value="PSII_cyt_b559_asu_sf"/>
</dbReference>
<dbReference type="InterPro" id="IPR006216">
    <property type="entry name" value="PSII_cyt_b559_CS"/>
</dbReference>
<dbReference type="InterPro" id="IPR013081">
    <property type="entry name" value="PSII_cyt_b559_N"/>
</dbReference>
<dbReference type="InterPro" id="IPR013082">
    <property type="entry name" value="PSII_cytb559_asu_lum"/>
</dbReference>
<dbReference type="NCBIfam" id="TIGR01332">
    <property type="entry name" value="cyt_b559_alpha"/>
    <property type="match status" value="1"/>
</dbReference>
<dbReference type="PANTHER" id="PTHR33391">
    <property type="entry name" value="CYTOCHROME B559 SUBUNIT BETA-RELATED"/>
    <property type="match status" value="1"/>
</dbReference>
<dbReference type="PANTHER" id="PTHR33391:SF9">
    <property type="entry name" value="CYTOCHROME B559 SUBUNIT BETA-RELATED"/>
    <property type="match status" value="1"/>
</dbReference>
<dbReference type="Pfam" id="PF00283">
    <property type="entry name" value="Cytochrom_B559"/>
    <property type="match status" value="1"/>
</dbReference>
<dbReference type="Pfam" id="PF00284">
    <property type="entry name" value="Cytochrom_B559a"/>
    <property type="match status" value="1"/>
</dbReference>
<dbReference type="PIRSF" id="PIRSF000036">
    <property type="entry name" value="PsbE"/>
    <property type="match status" value="1"/>
</dbReference>
<dbReference type="SUPFAM" id="SSF161045">
    <property type="entry name" value="Cytochrome b559 subunits"/>
    <property type="match status" value="1"/>
</dbReference>
<dbReference type="PROSITE" id="PS00537">
    <property type="entry name" value="CYTOCHROME_B559"/>
    <property type="match status" value="1"/>
</dbReference>
<name>PSBE_MICAN</name>
<protein>
    <recommendedName>
        <fullName evidence="1">Cytochrome b559 subunit alpha</fullName>
    </recommendedName>
    <alternativeName>
        <fullName evidence="1">PSII reaction center subunit V</fullName>
    </alternativeName>
</protein>